<gene>
    <name evidence="8" type="primary">PKS19</name>
    <name type="ORF">MGG_10912</name>
</gene>
<feature type="chain" id="PRO_0000446267" description="Highly reducing polyketide synthase 19">
    <location>
        <begin position="1"/>
        <end position="2571"/>
    </location>
</feature>
<feature type="domain" description="Ketosynthase family 3 (KS3)" evidence="3">
    <location>
        <begin position="51"/>
        <end position="485"/>
    </location>
</feature>
<feature type="domain" description="PKS/mFAS DH" evidence="4">
    <location>
        <begin position="1019"/>
        <end position="1344"/>
    </location>
</feature>
<feature type="domain" description="Carrier" evidence="2">
    <location>
        <begin position="2490"/>
        <end position="2568"/>
    </location>
</feature>
<feature type="region of interest" description="Disordered" evidence="6">
    <location>
        <begin position="1"/>
        <end position="51"/>
    </location>
</feature>
<feature type="region of interest" description="Malonyl-CoA:ACP transacylase (MAT) domain" evidence="1">
    <location>
        <begin position="609"/>
        <end position="932"/>
    </location>
</feature>
<feature type="region of interest" description="Dehydratase (DH) domain" evidence="1">
    <location>
        <begin position="1019"/>
        <end position="1340"/>
    </location>
</feature>
<feature type="region of interest" description="N-terminal hotdog fold" evidence="4">
    <location>
        <begin position="1019"/>
        <end position="1163"/>
    </location>
</feature>
<feature type="region of interest" description="C-terminal hotdog fold" evidence="4">
    <location>
        <begin position="1177"/>
        <end position="1344"/>
    </location>
</feature>
<feature type="region of interest" description="Enoyl reductase (ER) domain" evidence="1">
    <location>
        <begin position="1800"/>
        <end position="2140"/>
    </location>
</feature>
<feature type="region of interest" description="Ketoreductase (KR) domain" evidence="1">
    <location>
        <begin position="2177"/>
        <end position="2355"/>
    </location>
</feature>
<feature type="compositionally biased region" description="Polar residues" evidence="6">
    <location>
        <begin position="27"/>
        <end position="38"/>
    </location>
</feature>
<feature type="active site" description="For beta-ketoacyl synthase activity" evidence="3">
    <location>
        <position position="224"/>
    </location>
</feature>
<feature type="active site" description="For beta-ketoacyl synthase activity" evidence="3">
    <location>
        <position position="359"/>
    </location>
</feature>
<feature type="active site" description="For beta-ketoacyl synthase activity" evidence="3">
    <location>
        <position position="398"/>
    </location>
</feature>
<feature type="active site" description="For malonyltransferase activity" evidence="5">
    <location>
        <position position="701"/>
    </location>
</feature>
<feature type="active site" description="Proton acceptor; for dehydratase activity" evidence="4">
    <location>
        <position position="1051"/>
    </location>
</feature>
<feature type="active site" description="Proton donor; for dehydratase activity" evidence="4">
    <location>
        <position position="1241"/>
    </location>
</feature>
<feature type="modified residue" description="O-(pantetheine 4'-phosphoryl)serine" evidence="2">
    <location>
        <position position="2527"/>
    </location>
</feature>
<sequence length="2571" mass="271956">MSPIFLGDSEDAATCRCGPPSSPSPELSGTETALTSDSDGPELLNPGPQGPEPIAIIGMGCRLPGGASTPSKLWELLEAGRSAQGRLPADRYNMDAFYHPNGDRPGSMNTSGGYFIQEDVRGFDNSMFGINHLEAMYMDPQQRKLLEVTFEAFEAAGLSLDAVSGANVGCYVGNFVTDFITMQLKDAEYTHRYTATGSGTTILANRISHVFNLKGPSFVIDTACSSSLYSLHAACSALWQRECDAAVVAGANLIQSPEQQLATMKAGVLSGTSTCHTFDASADGYGRADGIGVLLVKRLSDAIRDNDPIRSVIRSTAVNSNGKTNGITLPSADGQEAVIRKAYALAGLGYGDTDYVECHGTGTAVGDPIEVEALSRVFRRQPGSQPLLIGSVKTNLGHSEAASGISSLLKVAMALECGRIPPTIGISSLNPKLKLDEWNMRIVTENTEWPQNRTPNGQQGGRALRRAGVNSFGYGGANAHCILESPDSHVPRGYRERGAATRLTNTTTGAPRTALLLPVSSKSASSLEQKSADIASYVAAKTASSADLQASELAYTLGVRRSHLSSRGFWIAAPDSLSEDVVVGSDAASSKLHTRIPGRAYGRHPLAFVFTGQGAQWAGMGRELMDEFPSFRRTVQMLDSTLQLLPHPPTWTLRGALLEPPESSSINLASRSQPVCTAVQLALVRLLRDWGVAPGFAVGHSSGEIAAAYAAGRLTARQAIAVAYYRGYAVERSTTVGAMMAAGLSQDEADGDIAALGLAGKIRVACVNSPESVTISGDTDGIDEYKAVLDGRGVFARLLKTDGRAYHSHHMAAIGGLYEDLVVEALASPAVQNDLDDAGQQNSSPAQWISSVTGQVVGDDMPTAEPSYWRANLESPVLFAQVVEKLLSPGTPVHLVEIGPHSALEMPIKQTRTKVGIDAAKTPYNSALLRGKNSTTTMLTLAGELFLHGHPIAFGAVNNTTTAHTHSRYPPTKPGMLLSARQPQVLTDLPRHVWEYDGGAGFHEPRSSIEWRNRTHARHDLLGSRVPGGDGITRQWRNVLRAADLAWLVGHKLDTTTVLPAAGYLAMAVEAACQSTGLSLERYGRGSPRCSFALRHVHVEKALMVPDDQQSGIEVFTTLQPTTAPRTATAGSGGWYKFIVSSFVAGESTRHAHGLVKLTQNEDRPPARRLPVEDEAMEQSAPRTWYRRFVQEGLNFSGPLQSLSRIETHRRRGEMHLLAQTSLSPGLGGESAYALHPIAIDALFQSGPIACTRGVVRDFTAKVPVYIKDMELRMPSRSLLSGSFVSPSGDESAEATAQQGSIRTICKSAGLGAISVDSQLFDGDDLVLCVSGCRMVPYSSGTAVGAAAGDGYERHPMLHVAWKPDVERLADAGIEHGASALTAYLSQFQGTTVIGDDADGVAGVLGAAKLAGGVLDLVVHKRPTLHVLLASDSTQDDGAAKHMRELLGVGTAFQRCLSLWKRSTDEDGAVHFQDLSAKEDTTANGTATAASSAPPSIFDVLVILDLDTSTKGSTSADLASYSSLVDEKKGTLIWSGPPSSASTASSGSIPAKLSPLGFSCMEAQQSHGTPVLEVVLAQRGLPDKKQELGQQEVLIVERNPDHKLNSELALHVAELTNKPAKRVTLDQLTPDLATAHATVIATVELEDALLADVKDGDFAQIKTLTDHCTNLIWVTGGGLADGTRPEQAVVFGLSRALMMEQPSLRFFVVGVDGECVAAETTARQVLGVARQALLDDAEPDFEFVQDGRAGGALQVSRFVPDDAMNSTFRQRQPNATETLEMRLGDAHPCRLSLAGPVAANMSDAFVFTRDLTHKNNDHGIGQDEVEVQVLTVGLHARDLRAMTGETSDGDGDTQPHAVTSQYVGRVVRVGSAVEGLGVDDSVLVMAPGRCATVERIPASSCSVLRDGEDPAAMASIPLPACTALYALRDRARLQPGETVLVCYREADAHGRDRSGPAAVHIARALGANVFAVVVVDDGDDEAKQEQRSEIVGDLGLPETHVSFVKVGDGAGFGSDMLSSHGRVQVVANFCTDRWPLSNVAALCADDARIVHVGRGTVLGELVTTDPTILRKNIALSTFDVNLLLTPVPSSPSTTRSGLLLDDVLSLWRQGKLNGLLGTQPRLFDVANLAEAFRALSGSTTKAGHTTPRGAVSVSFEATSLVRVAPPNYHTVFNPDKSYLLVGCLGGLGRSMSRWMLSRGARKFTFLGRSGTDREPAARLVQYLELCGASVTVVRGDVVDASDVERAVAASAAAGPIGGVVQAAMGLDEALFTAMPAAYWRKGLAPKVRGSLNLHAALAGRDADLDFFLMTSSVSGSVGTATESNYCAANYFLDVFARHRRGLGLPATSVGLGMISEVGYLHENPEIEAMLLRKGIQAISEDEMLNMIDISLSASSSSRTRGSPAAAWRGTDHALAHTLTGLEPIGVRELRAQGFDVSSPVLGDPRASLLAAALAADENESAGAGAGGASTSSGGLPAGLAQAVAGGSAGAVAAQALELVADKFSNLVLVPRDRLDLLRPLSDVGVDSMLAAEFRGWIYQQLKVNVPYLTMLASTTTLTMLSELIAGKLLEA</sequence>
<dbReference type="EC" id="2.3.1.-" evidence="7"/>
<dbReference type="EMBL" id="CM001233">
    <property type="protein sequence ID" value="EHA52508.1"/>
    <property type="molecule type" value="Genomic_DNA"/>
</dbReference>
<dbReference type="RefSeq" id="XP_003712315.1">
    <property type="nucleotide sequence ID" value="XM_003712267.1"/>
</dbReference>
<dbReference type="SMR" id="G4N296"/>
<dbReference type="STRING" id="242507.G4N296"/>
<dbReference type="EnsemblFungi" id="MGG_10912T0">
    <property type="protein sequence ID" value="MGG_10912T0"/>
    <property type="gene ID" value="MGG_10912"/>
</dbReference>
<dbReference type="GeneID" id="5048915"/>
<dbReference type="KEGG" id="mgr:MGG_10912"/>
<dbReference type="VEuPathDB" id="FungiDB:MGG_10912"/>
<dbReference type="eggNOG" id="KOG1202">
    <property type="taxonomic scope" value="Eukaryota"/>
</dbReference>
<dbReference type="HOGENOM" id="CLU_000022_31_1_1"/>
<dbReference type="InParanoid" id="G4N296"/>
<dbReference type="OMA" id="TSACHTF"/>
<dbReference type="OrthoDB" id="329835at2759"/>
<dbReference type="Proteomes" id="UP000009058">
    <property type="component" value="Chromosome 3"/>
</dbReference>
<dbReference type="GO" id="GO:0004315">
    <property type="term" value="F:3-oxoacyl-[acyl-carrier-protein] synthase activity"/>
    <property type="evidence" value="ECO:0007669"/>
    <property type="project" value="InterPro"/>
</dbReference>
<dbReference type="GO" id="GO:0004312">
    <property type="term" value="F:fatty acid synthase activity"/>
    <property type="evidence" value="ECO:0007669"/>
    <property type="project" value="TreeGrafter"/>
</dbReference>
<dbReference type="GO" id="GO:0016491">
    <property type="term" value="F:oxidoreductase activity"/>
    <property type="evidence" value="ECO:0007669"/>
    <property type="project" value="UniProtKB-KW"/>
</dbReference>
<dbReference type="GO" id="GO:0006633">
    <property type="term" value="P:fatty acid biosynthetic process"/>
    <property type="evidence" value="ECO:0007669"/>
    <property type="project" value="InterPro"/>
</dbReference>
<dbReference type="GO" id="GO:0044550">
    <property type="term" value="P:secondary metabolite biosynthetic process"/>
    <property type="evidence" value="ECO:0007669"/>
    <property type="project" value="TreeGrafter"/>
</dbReference>
<dbReference type="CDD" id="cd05195">
    <property type="entry name" value="enoyl_red"/>
    <property type="match status" value="1"/>
</dbReference>
<dbReference type="CDD" id="cd00833">
    <property type="entry name" value="PKS"/>
    <property type="match status" value="1"/>
</dbReference>
<dbReference type="Gene3D" id="3.30.70.3290">
    <property type="match status" value="1"/>
</dbReference>
<dbReference type="Gene3D" id="3.40.47.10">
    <property type="match status" value="1"/>
</dbReference>
<dbReference type="Gene3D" id="1.10.1200.10">
    <property type="entry name" value="ACP-like"/>
    <property type="match status" value="1"/>
</dbReference>
<dbReference type="Gene3D" id="3.40.366.10">
    <property type="entry name" value="Malonyl-Coenzyme A Acyl Carrier Protein, domain 2"/>
    <property type="match status" value="1"/>
</dbReference>
<dbReference type="Gene3D" id="3.90.180.10">
    <property type="entry name" value="Medium-chain alcohol dehydrogenases, catalytic domain"/>
    <property type="match status" value="1"/>
</dbReference>
<dbReference type="Gene3D" id="3.40.50.720">
    <property type="entry name" value="NAD(P)-binding Rossmann-like Domain"/>
    <property type="match status" value="2"/>
</dbReference>
<dbReference type="Gene3D" id="3.10.129.110">
    <property type="entry name" value="Polyketide synthase dehydratase"/>
    <property type="match status" value="1"/>
</dbReference>
<dbReference type="InterPro" id="IPR001227">
    <property type="entry name" value="Ac_transferase_dom_sf"/>
</dbReference>
<dbReference type="InterPro" id="IPR036736">
    <property type="entry name" value="ACP-like_sf"/>
</dbReference>
<dbReference type="InterPro" id="IPR014043">
    <property type="entry name" value="Acyl_transferase_dom"/>
</dbReference>
<dbReference type="InterPro" id="IPR016035">
    <property type="entry name" value="Acyl_Trfase/lysoPLipase"/>
</dbReference>
<dbReference type="InterPro" id="IPR013154">
    <property type="entry name" value="ADH-like_N"/>
</dbReference>
<dbReference type="InterPro" id="IPR011032">
    <property type="entry name" value="GroES-like_sf"/>
</dbReference>
<dbReference type="InterPro" id="IPR018201">
    <property type="entry name" value="Ketoacyl_synth_AS"/>
</dbReference>
<dbReference type="InterPro" id="IPR014031">
    <property type="entry name" value="Ketoacyl_synth_C"/>
</dbReference>
<dbReference type="InterPro" id="IPR014030">
    <property type="entry name" value="Ketoacyl_synth_N"/>
</dbReference>
<dbReference type="InterPro" id="IPR016036">
    <property type="entry name" value="Malonyl_transacylase_ACP-bd"/>
</dbReference>
<dbReference type="InterPro" id="IPR036291">
    <property type="entry name" value="NAD(P)-bd_dom_sf"/>
</dbReference>
<dbReference type="InterPro" id="IPR032821">
    <property type="entry name" value="PKS_assoc"/>
</dbReference>
<dbReference type="InterPro" id="IPR020841">
    <property type="entry name" value="PKS_Beta-ketoAc_synthase_dom"/>
</dbReference>
<dbReference type="InterPro" id="IPR042104">
    <property type="entry name" value="PKS_dehydratase_sf"/>
</dbReference>
<dbReference type="InterPro" id="IPR020807">
    <property type="entry name" value="PKS_DH"/>
</dbReference>
<dbReference type="InterPro" id="IPR049551">
    <property type="entry name" value="PKS_DH_C"/>
</dbReference>
<dbReference type="InterPro" id="IPR049552">
    <property type="entry name" value="PKS_DH_N"/>
</dbReference>
<dbReference type="InterPro" id="IPR020843">
    <property type="entry name" value="PKS_ER"/>
</dbReference>
<dbReference type="InterPro" id="IPR013968">
    <property type="entry name" value="PKS_KR"/>
</dbReference>
<dbReference type="InterPro" id="IPR049900">
    <property type="entry name" value="PKS_mFAS_DH"/>
</dbReference>
<dbReference type="InterPro" id="IPR050091">
    <property type="entry name" value="PKS_NRPS_Biosynth_Enz"/>
</dbReference>
<dbReference type="InterPro" id="IPR009081">
    <property type="entry name" value="PP-bd_ACP"/>
</dbReference>
<dbReference type="InterPro" id="IPR016039">
    <property type="entry name" value="Thiolase-like"/>
</dbReference>
<dbReference type="PANTHER" id="PTHR43775">
    <property type="entry name" value="FATTY ACID SYNTHASE"/>
    <property type="match status" value="1"/>
</dbReference>
<dbReference type="PANTHER" id="PTHR43775:SF50">
    <property type="entry name" value="HIGHLY REDUCING POLYKETIDE SYNTHASE SRDA"/>
    <property type="match status" value="1"/>
</dbReference>
<dbReference type="Pfam" id="PF00698">
    <property type="entry name" value="Acyl_transf_1"/>
    <property type="match status" value="1"/>
</dbReference>
<dbReference type="Pfam" id="PF08240">
    <property type="entry name" value="ADH_N"/>
    <property type="match status" value="1"/>
</dbReference>
<dbReference type="Pfam" id="PF16197">
    <property type="entry name" value="KAsynt_C_assoc"/>
    <property type="match status" value="1"/>
</dbReference>
<dbReference type="Pfam" id="PF00109">
    <property type="entry name" value="ketoacyl-synt"/>
    <property type="match status" value="1"/>
</dbReference>
<dbReference type="Pfam" id="PF02801">
    <property type="entry name" value="Ketoacyl-synt_C"/>
    <property type="match status" value="1"/>
</dbReference>
<dbReference type="Pfam" id="PF08659">
    <property type="entry name" value="KR"/>
    <property type="match status" value="1"/>
</dbReference>
<dbReference type="Pfam" id="PF21089">
    <property type="entry name" value="PKS_DH_N"/>
    <property type="match status" value="1"/>
</dbReference>
<dbReference type="Pfam" id="PF00550">
    <property type="entry name" value="PP-binding"/>
    <property type="match status" value="1"/>
</dbReference>
<dbReference type="Pfam" id="PF14765">
    <property type="entry name" value="PS-DH"/>
    <property type="match status" value="1"/>
</dbReference>
<dbReference type="SMART" id="SM00827">
    <property type="entry name" value="PKS_AT"/>
    <property type="match status" value="1"/>
</dbReference>
<dbReference type="SMART" id="SM00826">
    <property type="entry name" value="PKS_DH"/>
    <property type="match status" value="1"/>
</dbReference>
<dbReference type="SMART" id="SM00829">
    <property type="entry name" value="PKS_ER"/>
    <property type="match status" value="1"/>
</dbReference>
<dbReference type="SMART" id="SM00822">
    <property type="entry name" value="PKS_KR"/>
    <property type="match status" value="1"/>
</dbReference>
<dbReference type="SMART" id="SM00825">
    <property type="entry name" value="PKS_KS"/>
    <property type="match status" value="1"/>
</dbReference>
<dbReference type="SUPFAM" id="SSF47336">
    <property type="entry name" value="ACP-like"/>
    <property type="match status" value="1"/>
</dbReference>
<dbReference type="SUPFAM" id="SSF52151">
    <property type="entry name" value="FabD/lysophospholipase-like"/>
    <property type="match status" value="1"/>
</dbReference>
<dbReference type="SUPFAM" id="SSF50129">
    <property type="entry name" value="GroES-like"/>
    <property type="match status" value="1"/>
</dbReference>
<dbReference type="SUPFAM" id="SSF51735">
    <property type="entry name" value="NAD(P)-binding Rossmann-fold domains"/>
    <property type="match status" value="2"/>
</dbReference>
<dbReference type="SUPFAM" id="SSF55048">
    <property type="entry name" value="Probable ACP-binding domain of malonyl-CoA ACP transacylase"/>
    <property type="match status" value="1"/>
</dbReference>
<dbReference type="SUPFAM" id="SSF53901">
    <property type="entry name" value="Thiolase-like"/>
    <property type="match status" value="1"/>
</dbReference>
<dbReference type="PROSITE" id="PS50075">
    <property type="entry name" value="CARRIER"/>
    <property type="match status" value="1"/>
</dbReference>
<dbReference type="PROSITE" id="PS00606">
    <property type="entry name" value="KS3_1"/>
    <property type="match status" value="1"/>
</dbReference>
<dbReference type="PROSITE" id="PS52004">
    <property type="entry name" value="KS3_2"/>
    <property type="match status" value="1"/>
</dbReference>
<dbReference type="PROSITE" id="PS52019">
    <property type="entry name" value="PKS_MFAS_DH"/>
    <property type="match status" value="1"/>
</dbReference>
<organism>
    <name type="scientific">Pyricularia oryzae (strain 70-15 / ATCC MYA-4617 / FGSC 8958)</name>
    <name type="common">Rice blast fungus</name>
    <name type="synonym">Magnaporthe oryzae</name>
    <dbReference type="NCBI Taxonomy" id="242507"/>
    <lineage>
        <taxon>Eukaryota</taxon>
        <taxon>Fungi</taxon>
        <taxon>Dikarya</taxon>
        <taxon>Ascomycota</taxon>
        <taxon>Pezizomycotina</taxon>
        <taxon>Sordariomycetes</taxon>
        <taxon>Sordariomycetidae</taxon>
        <taxon>Magnaporthales</taxon>
        <taxon>Pyriculariaceae</taxon>
        <taxon>Pyricularia</taxon>
    </lineage>
</organism>
<proteinExistence type="evidence at transcript level"/>
<comment type="function">
    <text evidence="7 9">Highly reducing polyketide synthase; part of the gene cluster that mediates the biosynthesis of pyriculol and pyriculariol, two heptaketides that induce lesion formation upon application on rice leaves but are dispensable for pathogenicity (PubMed:27902426). The highly reducing polyketide synthase synthesizes the heptaketide backbone of pyriculol and pyriculariol (PubMed:27902426). Pyriculol and pyriculariol contain several hydroxyl moieties and double bonds, so it can be assumed that several reduction steps occur during biosynthesis. These reactions could be executed by PKS19 itself or partly by the tailoring enzymes OXR1, PXR2, RED1, RED2 or RED3, identified within the cluster (Probable). The FAD-linked oxidoreductase OXR1 is the only tailoring enzyme for which the function has been determined yet, and is involved in the oxidation of dihydropyriculol and dihydropyriculariol into pyriculol and pyriculariol, respectively (PubMed:27902426).</text>
</comment>
<comment type="pathway">
    <text evidence="7">Polyketide biosynthesis.</text>
</comment>
<comment type="induction">
    <text evidence="7">Expression is increased by fivefold in rice-extract medium (REM) and is correlated with the production of pyriculol (PubMed:27902426). Expression is also increased during invasive growth during rice infection (PubMed:27902426). Expression is negatively regulated by the 2 cluster-specific transcription factors TRF1 and TRF2 (PubMed:27902426).</text>
</comment>
<comment type="domain">
    <text evidence="9">Multidomain protein; including a ketosynthase (KS) that catalyzes repeated decarboxylative condensation to elongate the polyketide backbone; a malonyl-CoA:ACP transacylase (MAT) that selects and transfers the extender unit malonyl-CoA; a dehydratase (DH) domain that reduces hydroxyl groups to enoyl groups; an enoylreductase (ER) domain that reduces enoyl groups to alkyl group; a ketoreductase (KR) domain that catalyzes beta-ketoreduction steps; and an acyl-carrier protein (ACP) that serves as the tether of the growing and completed polyketide via its phosphopantetheinyl arm.</text>
</comment>
<comment type="disruption phenotype">
    <text evidence="7">Abolishes the production of pyriculol, pyriculariol, as well as of their dihydro derivatives dihydropyriculol and dihydropyriculariol.</text>
</comment>
<name>PKS19_PYRO7</name>
<protein>
    <recommendedName>
        <fullName evidence="8">Highly reducing polyketide synthase 19</fullName>
        <ecNumber evidence="7">2.3.1.-</ecNumber>
    </recommendedName>
    <alternativeName>
        <fullName evidence="8">Pyriculol/pyriculariol biosynthesis cluster protein PKS19</fullName>
    </alternativeName>
</protein>
<accession>G4N296</accession>
<evidence type="ECO:0000255" key="1"/>
<evidence type="ECO:0000255" key="2">
    <source>
        <dbReference type="PROSITE-ProRule" id="PRU00258"/>
    </source>
</evidence>
<evidence type="ECO:0000255" key="3">
    <source>
        <dbReference type="PROSITE-ProRule" id="PRU01348"/>
    </source>
</evidence>
<evidence type="ECO:0000255" key="4">
    <source>
        <dbReference type="PROSITE-ProRule" id="PRU01363"/>
    </source>
</evidence>
<evidence type="ECO:0000255" key="5">
    <source>
        <dbReference type="PROSITE-ProRule" id="PRU10022"/>
    </source>
</evidence>
<evidence type="ECO:0000256" key="6">
    <source>
        <dbReference type="SAM" id="MobiDB-lite"/>
    </source>
</evidence>
<evidence type="ECO:0000269" key="7">
    <source>
    </source>
</evidence>
<evidence type="ECO:0000303" key="8">
    <source>
    </source>
</evidence>
<evidence type="ECO:0000305" key="9">
    <source>
    </source>
</evidence>
<reference key="1">
    <citation type="journal article" date="2005" name="Nature">
        <title>The genome sequence of the rice blast fungus Magnaporthe grisea.</title>
        <authorList>
            <person name="Dean R.A."/>
            <person name="Talbot N.J."/>
            <person name="Ebbole D.J."/>
            <person name="Farman M.L."/>
            <person name="Mitchell T.K."/>
            <person name="Orbach M.J."/>
            <person name="Thon M.R."/>
            <person name="Kulkarni R."/>
            <person name="Xu J.-R."/>
            <person name="Pan H."/>
            <person name="Read N.D."/>
            <person name="Lee Y.-H."/>
            <person name="Carbone I."/>
            <person name="Brown D."/>
            <person name="Oh Y.Y."/>
            <person name="Donofrio N."/>
            <person name="Jeong J.S."/>
            <person name="Soanes D.M."/>
            <person name="Djonovic S."/>
            <person name="Kolomiets E."/>
            <person name="Rehmeyer C."/>
            <person name="Li W."/>
            <person name="Harding M."/>
            <person name="Kim S."/>
            <person name="Lebrun M.-H."/>
            <person name="Bohnert H."/>
            <person name="Coughlan S."/>
            <person name="Butler J."/>
            <person name="Calvo S.E."/>
            <person name="Ma L.-J."/>
            <person name="Nicol R."/>
            <person name="Purcell S."/>
            <person name="Nusbaum C."/>
            <person name="Galagan J.E."/>
            <person name="Birren B.W."/>
        </authorList>
    </citation>
    <scope>NUCLEOTIDE SEQUENCE [LARGE SCALE GENOMIC DNA]</scope>
    <source>
        <strain>70-15 / ATCC MYA-4617 / FGSC 8958</strain>
    </source>
</reference>
<reference key="2">
    <citation type="journal article" date="2017" name="Microbiology">
        <title>Unravelling the biosynthesis of pyriculol in the rice blast fungus Magnaporthe oryzae.</title>
        <authorList>
            <person name="Jacob S."/>
            <person name="Groetsch T."/>
            <person name="Foster A.J."/>
            <person name="Schueffler A."/>
            <person name="Rieger P.H."/>
            <person name="Sandjo L.P."/>
            <person name="Liermann J.C."/>
            <person name="Opatz T."/>
            <person name="Thines E."/>
        </authorList>
    </citation>
    <scope>IDENTIFICATION</scope>
    <scope>INDUCTION</scope>
    <scope>DISRUPTION PHENOTYPE</scope>
    <scope>FUNCTION</scope>
    <scope>PATHWAY</scope>
</reference>
<keyword id="KW-0012">Acyltransferase</keyword>
<keyword id="KW-0511">Multifunctional enzyme</keyword>
<keyword id="KW-0521">NADP</keyword>
<keyword id="KW-0560">Oxidoreductase</keyword>
<keyword id="KW-0596">Phosphopantetheine</keyword>
<keyword id="KW-0597">Phosphoprotein</keyword>
<keyword id="KW-1185">Reference proteome</keyword>
<keyword id="KW-0808">Transferase</keyword>